<dbReference type="EMBL" id="CP000875">
    <property type="protein sequence ID" value="ABX06515.1"/>
    <property type="molecule type" value="Genomic_DNA"/>
</dbReference>
<dbReference type="SMR" id="A9B8G2"/>
<dbReference type="FunCoup" id="A9B8G2">
    <property type="interactions" value="395"/>
</dbReference>
<dbReference type="STRING" id="316274.Haur_3881"/>
<dbReference type="KEGG" id="hau:Haur_3881"/>
<dbReference type="eggNOG" id="COG0184">
    <property type="taxonomic scope" value="Bacteria"/>
</dbReference>
<dbReference type="HOGENOM" id="CLU_148518_0_0_0"/>
<dbReference type="InParanoid" id="A9B8G2"/>
<dbReference type="Proteomes" id="UP000000787">
    <property type="component" value="Chromosome"/>
</dbReference>
<dbReference type="GO" id="GO:0022627">
    <property type="term" value="C:cytosolic small ribosomal subunit"/>
    <property type="evidence" value="ECO:0007669"/>
    <property type="project" value="TreeGrafter"/>
</dbReference>
<dbReference type="GO" id="GO:0019843">
    <property type="term" value="F:rRNA binding"/>
    <property type="evidence" value="ECO:0007669"/>
    <property type="project" value="UniProtKB-UniRule"/>
</dbReference>
<dbReference type="GO" id="GO:0003735">
    <property type="term" value="F:structural constituent of ribosome"/>
    <property type="evidence" value="ECO:0007669"/>
    <property type="project" value="InterPro"/>
</dbReference>
<dbReference type="GO" id="GO:0006412">
    <property type="term" value="P:translation"/>
    <property type="evidence" value="ECO:0007669"/>
    <property type="project" value="UniProtKB-UniRule"/>
</dbReference>
<dbReference type="CDD" id="cd00353">
    <property type="entry name" value="Ribosomal_S15p_S13e"/>
    <property type="match status" value="1"/>
</dbReference>
<dbReference type="FunFam" id="1.10.287.10:FF:000002">
    <property type="entry name" value="30S ribosomal protein S15"/>
    <property type="match status" value="1"/>
</dbReference>
<dbReference type="Gene3D" id="6.10.250.3130">
    <property type="match status" value="1"/>
</dbReference>
<dbReference type="Gene3D" id="1.10.287.10">
    <property type="entry name" value="S15/NS1, RNA-binding"/>
    <property type="match status" value="1"/>
</dbReference>
<dbReference type="HAMAP" id="MF_01343_B">
    <property type="entry name" value="Ribosomal_uS15_B"/>
    <property type="match status" value="1"/>
</dbReference>
<dbReference type="InterPro" id="IPR000589">
    <property type="entry name" value="Ribosomal_uS15"/>
</dbReference>
<dbReference type="InterPro" id="IPR005290">
    <property type="entry name" value="Ribosomal_uS15_bac-type"/>
</dbReference>
<dbReference type="InterPro" id="IPR009068">
    <property type="entry name" value="uS15_NS1_RNA-bd_sf"/>
</dbReference>
<dbReference type="NCBIfam" id="TIGR00952">
    <property type="entry name" value="S15_bact"/>
    <property type="match status" value="1"/>
</dbReference>
<dbReference type="PANTHER" id="PTHR23321">
    <property type="entry name" value="RIBOSOMAL PROTEIN S15, BACTERIAL AND ORGANELLAR"/>
    <property type="match status" value="1"/>
</dbReference>
<dbReference type="PANTHER" id="PTHR23321:SF26">
    <property type="entry name" value="SMALL RIBOSOMAL SUBUNIT PROTEIN US15M"/>
    <property type="match status" value="1"/>
</dbReference>
<dbReference type="Pfam" id="PF00312">
    <property type="entry name" value="Ribosomal_S15"/>
    <property type="match status" value="1"/>
</dbReference>
<dbReference type="SMART" id="SM01387">
    <property type="entry name" value="Ribosomal_S15"/>
    <property type="match status" value="1"/>
</dbReference>
<dbReference type="SUPFAM" id="SSF47060">
    <property type="entry name" value="S15/NS1 RNA-binding domain"/>
    <property type="match status" value="1"/>
</dbReference>
<dbReference type="PROSITE" id="PS00362">
    <property type="entry name" value="RIBOSOMAL_S15"/>
    <property type="match status" value="1"/>
</dbReference>
<gene>
    <name evidence="1" type="primary">rpsO</name>
    <name type="ordered locus">Haur_3881</name>
</gene>
<proteinExistence type="inferred from homology"/>
<feature type="chain" id="PRO_1000143127" description="Small ribosomal subunit protein uS15">
    <location>
        <begin position="1"/>
        <end position="90"/>
    </location>
</feature>
<comment type="function">
    <text evidence="1">One of the primary rRNA binding proteins, it binds directly to 16S rRNA where it helps nucleate assembly of the platform of the 30S subunit by binding and bridging several RNA helices of the 16S rRNA.</text>
</comment>
<comment type="function">
    <text evidence="1">Forms an intersubunit bridge (bridge B4) with the 23S rRNA of the 50S subunit in the ribosome.</text>
</comment>
<comment type="subunit">
    <text evidence="1">Part of the 30S ribosomal subunit. Forms a bridge to the 50S subunit in the 70S ribosome, contacting the 23S rRNA.</text>
</comment>
<comment type="similarity">
    <text evidence="1">Belongs to the universal ribosomal protein uS15 family.</text>
</comment>
<protein>
    <recommendedName>
        <fullName evidence="1">Small ribosomal subunit protein uS15</fullName>
    </recommendedName>
    <alternativeName>
        <fullName evidence="2">30S ribosomal protein S15</fullName>
    </alternativeName>
</protein>
<sequence>MSLEKDKSTVINNYKLHESDTGSADVQIALLTDRINQLIEHLKLHKQDHHSRRGLLKLVGRRRRLLAYLSKKDNARFRAVSERLGLRIKA</sequence>
<name>RS15_HERA2</name>
<organism>
    <name type="scientific">Herpetosiphon aurantiacus (strain ATCC 23779 / DSM 785 / 114-95)</name>
    <dbReference type="NCBI Taxonomy" id="316274"/>
    <lineage>
        <taxon>Bacteria</taxon>
        <taxon>Bacillati</taxon>
        <taxon>Chloroflexota</taxon>
        <taxon>Chloroflexia</taxon>
        <taxon>Herpetosiphonales</taxon>
        <taxon>Herpetosiphonaceae</taxon>
        <taxon>Herpetosiphon</taxon>
    </lineage>
</organism>
<reference key="1">
    <citation type="journal article" date="2011" name="Stand. Genomic Sci.">
        <title>Complete genome sequence of the filamentous gliding predatory bacterium Herpetosiphon aurantiacus type strain (114-95(T)).</title>
        <authorList>
            <person name="Kiss H."/>
            <person name="Nett M."/>
            <person name="Domin N."/>
            <person name="Martin K."/>
            <person name="Maresca J.A."/>
            <person name="Copeland A."/>
            <person name="Lapidus A."/>
            <person name="Lucas S."/>
            <person name="Berry K.W."/>
            <person name="Glavina Del Rio T."/>
            <person name="Dalin E."/>
            <person name="Tice H."/>
            <person name="Pitluck S."/>
            <person name="Richardson P."/>
            <person name="Bruce D."/>
            <person name="Goodwin L."/>
            <person name="Han C."/>
            <person name="Detter J.C."/>
            <person name="Schmutz J."/>
            <person name="Brettin T."/>
            <person name="Land M."/>
            <person name="Hauser L."/>
            <person name="Kyrpides N.C."/>
            <person name="Ivanova N."/>
            <person name="Goeker M."/>
            <person name="Woyke T."/>
            <person name="Klenk H.P."/>
            <person name="Bryant D.A."/>
        </authorList>
    </citation>
    <scope>NUCLEOTIDE SEQUENCE [LARGE SCALE GENOMIC DNA]</scope>
    <source>
        <strain>ATCC 23779 / DSM 785 / 114-95</strain>
    </source>
</reference>
<accession>A9B8G2</accession>
<keyword id="KW-0687">Ribonucleoprotein</keyword>
<keyword id="KW-0689">Ribosomal protein</keyword>
<keyword id="KW-0694">RNA-binding</keyword>
<keyword id="KW-0699">rRNA-binding</keyword>
<evidence type="ECO:0000255" key="1">
    <source>
        <dbReference type="HAMAP-Rule" id="MF_01343"/>
    </source>
</evidence>
<evidence type="ECO:0000305" key="2"/>